<accession>Q9I6H1</accession>
<reference evidence="9" key="1">
    <citation type="journal article" date="2000" name="Nature">
        <title>Complete genome sequence of Pseudomonas aeruginosa PAO1, an opportunistic pathogen.</title>
        <authorList>
            <person name="Stover C.K."/>
            <person name="Pham X.-Q.T."/>
            <person name="Erwin A.L."/>
            <person name="Mizoguchi S.D."/>
            <person name="Warrener P."/>
            <person name="Hickey M.J."/>
            <person name="Brinkman F.S.L."/>
            <person name="Hufnagle W.O."/>
            <person name="Kowalik D.J."/>
            <person name="Lagrou M."/>
            <person name="Garber R.L."/>
            <person name="Goltry L."/>
            <person name="Tolentino E."/>
            <person name="Westbrock-Wadman S."/>
            <person name="Yuan Y."/>
            <person name="Brody L.L."/>
            <person name="Coulter S.N."/>
            <person name="Folger K.R."/>
            <person name="Kas A."/>
            <person name="Larbig K."/>
            <person name="Lim R.M."/>
            <person name="Smith K.A."/>
            <person name="Spencer D.H."/>
            <person name="Wong G.K.-S."/>
            <person name="Wu Z."/>
            <person name="Paulsen I.T."/>
            <person name="Reizer J."/>
            <person name="Saier M.H. Jr."/>
            <person name="Hancock R.E.W."/>
            <person name="Lory S."/>
            <person name="Olson M.V."/>
        </authorList>
    </citation>
    <scope>NUCLEOTIDE SEQUENCE [LARGE SCALE GENOMIC DNA]</scope>
    <source>
        <strain evidence="9">ATCC 15692 / DSM 22644 / CIP 104116 / JCM 14847 / LMG 12228 / 1C / PRS 101 / PAO1</strain>
    </source>
</reference>
<reference evidence="6" key="2">
    <citation type="journal article" date="2012" name="J. Gen. Appl. Microbiol.">
        <title>YgiW homologous gene from Pseudomonas aeruginosa 25W is responsible for tributyltin resistance.</title>
        <authorList>
            <person name="Fukushima K."/>
            <person name="Kumar S.D."/>
            <person name="Suzuki S."/>
        </authorList>
    </citation>
    <scope>FUNCTION</scope>
    <scope>DISRUPTION PHENOTYPE</scope>
    <source>
        <strain evidence="6">25W</strain>
    </source>
</reference>
<reference evidence="6" key="3">
    <citation type="journal article" date="2016" name="J. Bacteriol.">
        <title>The Pseudomonas aeruginosa PAO1 Two-Component Regulator CarSR Regulates Calcium Homeostasis and Calcium-Induced Virulence Factor Production through Its Regulatory Targets CarO and CarP.</title>
        <authorList>
            <person name="Guragain M."/>
            <person name="King M.M."/>
            <person name="Williamson K.S."/>
            <person name="Perez-Osorio A.C."/>
            <person name="Akiyama T."/>
            <person name="Khanam S."/>
            <person name="Patrauchan M.A."/>
            <person name="Franklin M.J."/>
        </authorList>
    </citation>
    <scope>FUNCTION</scope>
    <scope>SUBCELLULAR LOCATION</scope>
    <scope>DISRUPTION PHENOTYPE</scope>
</reference>
<comment type="function">
    <text evidence="2 3">Plays a role in intracellular Ca(2+) homeostasis (PubMed:26755627). Involved in cell protection against oxidative stress in strain 25W (PubMed:22990488).</text>
</comment>
<comment type="subcellular location">
    <subcellularLocation>
        <location evidence="5">Periplasm</location>
    </subcellularLocation>
</comment>
<comment type="disruption phenotype">
    <text evidence="2 3">Does not affect growth at high Ca(2+) level (PubMed:26755627). Does not affect the basal intracellular concentration of Ca(2+), but impairs recovery to the resting intracellular Ca(2+) (PubMed:26755627). Increases sensitivity to tobramycin at high Ca(2+) (PubMed:26755627). In strain 25W, increases sensitivity to tributyltin (TBT), cadmium, mercury, acidic pH and hydrogen peroxide (PubMed:22990488).</text>
</comment>
<comment type="miscellaneous">
    <text evidence="7">Strain 25W was isolated in the ocean, whereas the reference strain PAO1 came from wounds in infected humans.</text>
</comment>
<sequence>MKLRHLPLIAAIGLFSTVTLAAGYTGPGATPTTTTVKAALEAADDTPVVLQGTIVKRIKGDIYEFRDATGSMKVEIDDEDFPPMEINDKTRVKLTGEVDRDLVGREIDVEFVEVIK</sequence>
<organism evidence="9">
    <name type="scientific">Pseudomonas aeruginosa (strain ATCC 15692 / DSM 22644 / CIP 104116 / JCM 14847 / LMG 12228 / 1C / PRS 101 / PAO1)</name>
    <dbReference type="NCBI Taxonomy" id="208964"/>
    <lineage>
        <taxon>Bacteria</taxon>
        <taxon>Pseudomonadati</taxon>
        <taxon>Pseudomonadota</taxon>
        <taxon>Gammaproteobacteria</taxon>
        <taxon>Pseudomonadales</taxon>
        <taxon>Pseudomonadaceae</taxon>
        <taxon>Pseudomonas</taxon>
    </lineage>
</organism>
<proteinExistence type="inferred from homology"/>
<dbReference type="EMBL" id="AE004091">
    <property type="protein sequence ID" value="AAG03709.1"/>
    <property type="molecule type" value="Genomic_DNA"/>
</dbReference>
<dbReference type="PIR" id="A83605">
    <property type="entry name" value="A83605"/>
</dbReference>
<dbReference type="RefSeq" id="NP_249011.1">
    <property type="nucleotide sequence ID" value="NC_002516.2"/>
</dbReference>
<dbReference type="RefSeq" id="WP_003084357.1">
    <property type="nucleotide sequence ID" value="NZ_QZGE01000016.1"/>
</dbReference>
<dbReference type="SMR" id="Q9I6H1"/>
<dbReference type="FunCoup" id="Q9I6H1">
    <property type="interactions" value="100"/>
</dbReference>
<dbReference type="STRING" id="208964.PA0320"/>
<dbReference type="PaxDb" id="208964-PA0320"/>
<dbReference type="DNASU" id="878326"/>
<dbReference type="GeneID" id="878326"/>
<dbReference type="KEGG" id="pae:PA0320"/>
<dbReference type="PATRIC" id="fig|208964.12.peg.336"/>
<dbReference type="PseudoCAP" id="PA0320"/>
<dbReference type="HOGENOM" id="CLU_118907_0_1_6"/>
<dbReference type="InParanoid" id="Q9I6H1"/>
<dbReference type="OrthoDB" id="598245at2"/>
<dbReference type="PhylomeDB" id="Q9I6H1"/>
<dbReference type="BioCyc" id="PAER208964:G1FZ6-323-MONOMER"/>
<dbReference type="Proteomes" id="UP000002438">
    <property type="component" value="Chromosome"/>
</dbReference>
<dbReference type="GO" id="GO:0042597">
    <property type="term" value="C:periplasmic space"/>
    <property type="evidence" value="ECO:0007669"/>
    <property type="project" value="UniProtKB-SubCell"/>
</dbReference>
<dbReference type="GO" id="GO:0055074">
    <property type="term" value="P:calcium ion homeostasis"/>
    <property type="evidence" value="ECO:0000315"/>
    <property type="project" value="UniProtKB"/>
</dbReference>
<dbReference type="GO" id="GO:0046677">
    <property type="term" value="P:response to antibiotic"/>
    <property type="evidence" value="ECO:0000315"/>
    <property type="project" value="PseudoCAP"/>
</dbReference>
<dbReference type="GO" id="GO:0046686">
    <property type="term" value="P:response to cadmium ion"/>
    <property type="evidence" value="ECO:0000315"/>
    <property type="project" value="PseudoCAP"/>
</dbReference>
<dbReference type="GO" id="GO:0051592">
    <property type="term" value="P:response to calcium ion"/>
    <property type="evidence" value="ECO:0000315"/>
    <property type="project" value="UniProtKB"/>
</dbReference>
<dbReference type="GO" id="GO:0046689">
    <property type="term" value="P:response to mercury ion"/>
    <property type="evidence" value="ECO:0000315"/>
    <property type="project" value="PseudoCAP"/>
</dbReference>
<dbReference type="FunFam" id="2.40.50.200:FF:000003">
    <property type="entry name" value="Stress-induced protein YgiW"/>
    <property type="match status" value="1"/>
</dbReference>
<dbReference type="Gene3D" id="2.40.50.200">
    <property type="entry name" value="Bacterial OB-fold"/>
    <property type="match status" value="1"/>
</dbReference>
<dbReference type="InterPro" id="IPR036700">
    <property type="entry name" value="BOBF_sf"/>
</dbReference>
<dbReference type="InterPro" id="IPR005220">
    <property type="entry name" value="BOF"/>
</dbReference>
<dbReference type="InterPro" id="IPR052401">
    <property type="entry name" value="Ca-regulated_OB-fold"/>
</dbReference>
<dbReference type="NCBIfam" id="NF033674">
    <property type="entry name" value="stress_OB_fold"/>
    <property type="match status" value="1"/>
</dbReference>
<dbReference type="PANTHER" id="PTHR36571">
    <property type="entry name" value="PROTEIN YGIW"/>
    <property type="match status" value="1"/>
</dbReference>
<dbReference type="PANTHER" id="PTHR36571:SF1">
    <property type="entry name" value="PROTEIN YGIW"/>
    <property type="match status" value="1"/>
</dbReference>
<dbReference type="Pfam" id="PF04076">
    <property type="entry name" value="BOF"/>
    <property type="match status" value="1"/>
</dbReference>
<dbReference type="SUPFAM" id="SSF101756">
    <property type="entry name" value="Hypothetical protein YgiW"/>
    <property type="match status" value="1"/>
</dbReference>
<gene>
    <name evidence="5" type="primary">carO</name>
    <name evidence="8" type="ordered locus">PA0320</name>
</gene>
<keyword id="KW-0574">Periplasm</keyword>
<keyword id="KW-1185">Reference proteome</keyword>
<keyword id="KW-0732">Signal</keyword>
<evidence type="ECO:0000255" key="1"/>
<evidence type="ECO:0000269" key="2">
    <source>
    </source>
</evidence>
<evidence type="ECO:0000269" key="3">
    <source>
    </source>
</evidence>
<evidence type="ECO:0000303" key="4">
    <source>
    </source>
</evidence>
<evidence type="ECO:0000303" key="5">
    <source>
    </source>
</evidence>
<evidence type="ECO:0000305" key="6"/>
<evidence type="ECO:0000305" key="7">
    <source>
    </source>
</evidence>
<evidence type="ECO:0000312" key="8">
    <source>
        <dbReference type="EMBL" id="AAG03709.1"/>
    </source>
</evidence>
<evidence type="ECO:0000312" key="9">
    <source>
        <dbReference type="Proteomes" id="UP000002438"/>
    </source>
</evidence>
<feature type="signal peptide" evidence="1">
    <location>
        <begin position="1"/>
        <end position="21"/>
    </location>
</feature>
<feature type="chain" id="PRO_5004327552" description="Calcium-regulated OB-fold protein CarO" evidence="1">
    <location>
        <begin position="22"/>
        <end position="116"/>
    </location>
</feature>
<name>CARO_PSEAE</name>
<protein>
    <recommendedName>
        <fullName evidence="5">Calcium-regulated OB-fold protein CarO</fullName>
    </recommendedName>
    <alternativeName>
        <fullName evidence="4">Bacterial OB-fold domain-containing protein</fullName>
    </alternativeName>
</protein>